<name>HYPA_RIPO1</name>
<feature type="chain" id="PRO_1000190724" description="Hydrogenase maturation factor HypA">
    <location>
        <begin position="1"/>
        <end position="114"/>
    </location>
</feature>
<feature type="binding site" evidence="1">
    <location>
        <position position="2"/>
    </location>
    <ligand>
        <name>Ni(2+)</name>
        <dbReference type="ChEBI" id="CHEBI:49786"/>
    </ligand>
</feature>
<feature type="binding site" evidence="1">
    <location>
        <position position="70"/>
    </location>
    <ligand>
        <name>Zn(2+)</name>
        <dbReference type="ChEBI" id="CHEBI:29105"/>
    </ligand>
</feature>
<feature type="binding site" evidence="1">
    <location>
        <position position="73"/>
    </location>
    <ligand>
        <name>Zn(2+)</name>
        <dbReference type="ChEBI" id="CHEBI:29105"/>
    </ligand>
</feature>
<feature type="binding site" evidence="1">
    <location>
        <position position="86"/>
    </location>
    <ligand>
        <name>Zn(2+)</name>
        <dbReference type="ChEBI" id="CHEBI:29105"/>
    </ligand>
</feature>
<feature type="binding site" evidence="1">
    <location>
        <position position="89"/>
    </location>
    <ligand>
        <name>Zn(2+)</name>
        <dbReference type="ChEBI" id="CHEBI:29105"/>
    </ligand>
</feature>
<accession>B7JUE3</accession>
<proteinExistence type="inferred from homology"/>
<reference key="1">
    <citation type="journal article" date="2011" name="MBio">
        <title>Novel metabolic attributes of the genus Cyanothece, comprising a group of unicellular nitrogen-fixing Cyanobacteria.</title>
        <authorList>
            <person name="Bandyopadhyay A."/>
            <person name="Elvitigala T."/>
            <person name="Welsh E."/>
            <person name="Stockel J."/>
            <person name="Liberton M."/>
            <person name="Min H."/>
            <person name="Sherman L.A."/>
            <person name="Pakrasi H.B."/>
        </authorList>
    </citation>
    <scope>NUCLEOTIDE SEQUENCE [LARGE SCALE GENOMIC DNA]</scope>
    <source>
        <strain>PCC 8801 / RF-1</strain>
    </source>
</reference>
<comment type="function">
    <text evidence="1">Involved in the maturation of [NiFe] hydrogenases. Required for nickel insertion into the metal center of the hydrogenase.</text>
</comment>
<comment type="similarity">
    <text evidence="1">Belongs to the HypA/HybF family.</text>
</comment>
<dbReference type="EMBL" id="CP001287">
    <property type="protein sequence ID" value="ACK64523.1"/>
    <property type="molecule type" value="Genomic_DNA"/>
</dbReference>
<dbReference type="RefSeq" id="WP_012593800.1">
    <property type="nucleotide sequence ID" value="NC_011726.1"/>
</dbReference>
<dbReference type="SMR" id="B7JUE3"/>
<dbReference type="STRING" id="41431.PCC8801_0426"/>
<dbReference type="KEGG" id="cyp:PCC8801_0426"/>
<dbReference type="eggNOG" id="COG0375">
    <property type="taxonomic scope" value="Bacteria"/>
</dbReference>
<dbReference type="HOGENOM" id="CLU_126929_3_0_3"/>
<dbReference type="OrthoDB" id="9800361at2"/>
<dbReference type="Proteomes" id="UP000008204">
    <property type="component" value="Chromosome"/>
</dbReference>
<dbReference type="GO" id="GO:0016151">
    <property type="term" value="F:nickel cation binding"/>
    <property type="evidence" value="ECO:0007669"/>
    <property type="project" value="UniProtKB-UniRule"/>
</dbReference>
<dbReference type="GO" id="GO:0008270">
    <property type="term" value="F:zinc ion binding"/>
    <property type="evidence" value="ECO:0007669"/>
    <property type="project" value="UniProtKB-UniRule"/>
</dbReference>
<dbReference type="GO" id="GO:0051604">
    <property type="term" value="P:protein maturation"/>
    <property type="evidence" value="ECO:0007669"/>
    <property type="project" value="InterPro"/>
</dbReference>
<dbReference type="GO" id="GO:0036211">
    <property type="term" value="P:protein modification process"/>
    <property type="evidence" value="ECO:0007669"/>
    <property type="project" value="UniProtKB-UniRule"/>
</dbReference>
<dbReference type="Gene3D" id="3.30.2320.80">
    <property type="match status" value="1"/>
</dbReference>
<dbReference type="HAMAP" id="MF_00213">
    <property type="entry name" value="HypA_HybF"/>
    <property type="match status" value="1"/>
</dbReference>
<dbReference type="InterPro" id="IPR020538">
    <property type="entry name" value="Hydgase_Ni_incorp_HypA/HybF_CS"/>
</dbReference>
<dbReference type="InterPro" id="IPR000688">
    <property type="entry name" value="HypA/HybF"/>
</dbReference>
<dbReference type="NCBIfam" id="TIGR00100">
    <property type="entry name" value="hypA"/>
    <property type="match status" value="1"/>
</dbReference>
<dbReference type="PANTHER" id="PTHR34535">
    <property type="entry name" value="HYDROGENASE MATURATION FACTOR HYPA"/>
    <property type="match status" value="1"/>
</dbReference>
<dbReference type="PANTHER" id="PTHR34535:SF3">
    <property type="entry name" value="HYDROGENASE MATURATION FACTOR HYPA"/>
    <property type="match status" value="1"/>
</dbReference>
<dbReference type="Pfam" id="PF01155">
    <property type="entry name" value="HypA"/>
    <property type="match status" value="1"/>
</dbReference>
<dbReference type="PIRSF" id="PIRSF004761">
    <property type="entry name" value="Hydrgn_mat_HypA"/>
    <property type="match status" value="1"/>
</dbReference>
<dbReference type="PROSITE" id="PS01249">
    <property type="entry name" value="HYPA"/>
    <property type="match status" value="1"/>
</dbReference>
<organism>
    <name type="scientific">Rippkaea orientalis (strain PCC 8801 / RF-1)</name>
    <name type="common">Cyanothece sp. (strain PCC 8801)</name>
    <dbReference type="NCBI Taxonomy" id="41431"/>
    <lineage>
        <taxon>Bacteria</taxon>
        <taxon>Bacillati</taxon>
        <taxon>Cyanobacteriota</taxon>
        <taxon>Cyanophyceae</taxon>
        <taxon>Oscillatoriophycideae</taxon>
        <taxon>Chroococcales</taxon>
        <taxon>Aphanothecaceae</taxon>
        <taxon>Rippkaea</taxon>
        <taxon>Rippkaea orientalis</taxon>
    </lineage>
</organism>
<sequence>MHELGITQNIIAIVAEQAKGIPVKRVTLEIGQLSAIMADSIRFCFDICCQGTVLEGATLEIIEILGRGKCRDCGQEIALFQPFGTCDRCGSIQLEIIQGQELKIKEMEIEEICV</sequence>
<protein>
    <recommendedName>
        <fullName evidence="1">Hydrogenase maturation factor HypA</fullName>
    </recommendedName>
</protein>
<evidence type="ECO:0000255" key="1">
    <source>
        <dbReference type="HAMAP-Rule" id="MF_00213"/>
    </source>
</evidence>
<keyword id="KW-0479">Metal-binding</keyword>
<keyword id="KW-0533">Nickel</keyword>
<keyword id="KW-1185">Reference proteome</keyword>
<keyword id="KW-0862">Zinc</keyword>
<gene>
    <name evidence="1" type="primary">hypA</name>
    <name type="ordered locus">PCC8801_0426</name>
</gene>